<accession>Q5L3U7</accession>
<evidence type="ECO:0000255" key="1">
    <source>
        <dbReference type="HAMAP-Rule" id="MF_00083"/>
    </source>
</evidence>
<keyword id="KW-0963">Cytoplasm</keyword>
<keyword id="KW-0378">Hydrolase</keyword>
<keyword id="KW-1185">Reference proteome</keyword>
<keyword id="KW-0694">RNA-binding</keyword>
<keyword id="KW-0820">tRNA-binding</keyword>
<name>PTH_GEOKA</name>
<sequence length="186" mass="20598">MKLFVGLGNPGKEYEQTRHNVGFFVIDELAKRWNVSLKTAKFRGLFGTASVSGEKVALCKPLTYMNLSGECVRPLMDYYDIAIDDVIVIYDDLDLPPGKIRLRLKGSSGGHNGVKSLIHHLGTEQFKRIRIGIGRPAGGQPVTDYVLGRFTEEEKPAVDKAVLRAADACEQAVKAPFIQVMNDFNE</sequence>
<dbReference type="EC" id="3.1.1.29" evidence="1"/>
<dbReference type="EMBL" id="BA000043">
    <property type="protein sequence ID" value="BAD74331.1"/>
    <property type="molecule type" value="Genomic_DNA"/>
</dbReference>
<dbReference type="RefSeq" id="WP_011229561.1">
    <property type="nucleotide sequence ID" value="NC_006510.1"/>
</dbReference>
<dbReference type="SMR" id="Q5L3U7"/>
<dbReference type="STRING" id="235909.GK0046"/>
<dbReference type="KEGG" id="gka:GK0046"/>
<dbReference type="eggNOG" id="COG0193">
    <property type="taxonomic scope" value="Bacteria"/>
</dbReference>
<dbReference type="HOGENOM" id="CLU_062456_4_1_9"/>
<dbReference type="Proteomes" id="UP000001172">
    <property type="component" value="Chromosome"/>
</dbReference>
<dbReference type="GO" id="GO:0005737">
    <property type="term" value="C:cytoplasm"/>
    <property type="evidence" value="ECO:0007669"/>
    <property type="project" value="UniProtKB-SubCell"/>
</dbReference>
<dbReference type="GO" id="GO:0004045">
    <property type="term" value="F:peptidyl-tRNA hydrolase activity"/>
    <property type="evidence" value="ECO:0007669"/>
    <property type="project" value="UniProtKB-UniRule"/>
</dbReference>
<dbReference type="GO" id="GO:0000049">
    <property type="term" value="F:tRNA binding"/>
    <property type="evidence" value="ECO:0007669"/>
    <property type="project" value="UniProtKB-UniRule"/>
</dbReference>
<dbReference type="GO" id="GO:0006515">
    <property type="term" value="P:protein quality control for misfolded or incompletely synthesized proteins"/>
    <property type="evidence" value="ECO:0007669"/>
    <property type="project" value="UniProtKB-UniRule"/>
</dbReference>
<dbReference type="GO" id="GO:0072344">
    <property type="term" value="P:rescue of stalled ribosome"/>
    <property type="evidence" value="ECO:0007669"/>
    <property type="project" value="UniProtKB-UniRule"/>
</dbReference>
<dbReference type="CDD" id="cd00462">
    <property type="entry name" value="PTH"/>
    <property type="match status" value="1"/>
</dbReference>
<dbReference type="FunFam" id="3.40.50.1470:FF:000001">
    <property type="entry name" value="Peptidyl-tRNA hydrolase"/>
    <property type="match status" value="1"/>
</dbReference>
<dbReference type="Gene3D" id="3.40.50.1470">
    <property type="entry name" value="Peptidyl-tRNA hydrolase"/>
    <property type="match status" value="1"/>
</dbReference>
<dbReference type="HAMAP" id="MF_00083">
    <property type="entry name" value="Pept_tRNA_hydro_bact"/>
    <property type="match status" value="1"/>
</dbReference>
<dbReference type="InterPro" id="IPR001328">
    <property type="entry name" value="Pept_tRNA_hydro"/>
</dbReference>
<dbReference type="InterPro" id="IPR018171">
    <property type="entry name" value="Pept_tRNA_hydro_CS"/>
</dbReference>
<dbReference type="InterPro" id="IPR036416">
    <property type="entry name" value="Pept_tRNA_hydro_sf"/>
</dbReference>
<dbReference type="NCBIfam" id="TIGR00447">
    <property type="entry name" value="pth"/>
    <property type="match status" value="1"/>
</dbReference>
<dbReference type="PANTHER" id="PTHR17224">
    <property type="entry name" value="PEPTIDYL-TRNA HYDROLASE"/>
    <property type="match status" value="1"/>
</dbReference>
<dbReference type="PANTHER" id="PTHR17224:SF1">
    <property type="entry name" value="PEPTIDYL-TRNA HYDROLASE"/>
    <property type="match status" value="1"/>
</dbReference>
<dbReference type="Pfam" id="PF01195">
    <property type="entry name" value="Pept_tRNA_hydro"/>
    <property type="match status" value="1"/>
</dbReference>
<dbReference type="SUPFAM" id="SSF53178">
    <property type="entry name" value="Peptidyl-tRNA hydrolase-like"/>
    <property type="match status" value="1"/>
</dbReference>
<dbReference type="PROSITE" id="PS01195">
    <property type="entry name" value="PEPT_TRNA_HYDROL_1"/>
    <property type="match status" value="1"/>
</dbReference>
<dbReference type="PROSITE" id="PS01196">
    <property type="entry name" value="PEPT_TRNA_HYDROL_2"/>
    <property type="match status" value="1"/>
</dbReference>
<protein>
    <recommendedName>
        <fullName evidence="1">Peptidyl-tRNA hydrolase</fullName>
        <shortName evidence="1">Pth</shortName>
        <ecNumber evidence="1">3.1.1.29</ecNumber>
    </recommendedName>
</protein>
<organism>
    <name type="scientific">Geobacillus kaustophilus (strain HTA426)</name>
    <dbReference type="NCBI Taxonomy" id="235909"/>
    <lineage>
        <taxon>Bacteria</taxon>
        <taxon>Bacillati</taxon>
        <taxon>Bacillota</taxon>
        <taxon>Bacilli</taxon>
        <taxon>Bacillales</taxon>
        <taxon>Anoxybacillaceae</taxon>
        <taxon>Geobacillus</taxon>
        <taxon>Geobacillus thermoleovorans group</taxon>
    </lineage>
</organism>
<reference key="1">
    <citation type="journal article" date="2004" name="Nucleic Acids Res.">
        <title>Thermoadaptation trait revealed by the genome sequence of thermophilic Geobacillus kaustophilus.</title>
        <authorList>
            <person name="Takami H."/>
            <person name="Takaki Y."/>
            <person name="Chee G.-J."/>
            <person name="Nishi S."/>
            <person name="Shimamura S."/>
            <person name="Suzuki H."/>
            <person name="Matsui S."/>
            <person name="Uchiyama I."/>
        </authorList>
    </citation>
    <scope>NUCLEOTIDE SEQUENCE [LARGE SCALE GENOMIC DNA]</scope>
    <source>
        <strain>HTA426</strain>
    </source>
</reference>
<comment type="function">
    <text evidence="1">Hydrolyzes ribosome-free peptidyl-tRNAs (with 1 or more amino acids incorporated), which drop off the ribosome during protein synthesis, or as a result of ribosome stalling.</text>
</comment>
<comment type="function">
    <text evidence="1">Catalyzes the release of premature peptidyl moieties from peptidyl-tRNA molecules trapped in stalled 50S ribosomal subunits, and thus maintains levels of free tRNAs and 50S ribosomes.</text>
</comment>
<comment type="catalytic activity">
    <reaction evidence="1">
        <text>an N-acyl-L-alpha-aminoacyl-tRNA + H2O = an N-acyl-L-amino acid + a tRNA + H(+)</text>
        <dbReference type="Rhea" id="RHEA:54448"/>
        <dbReference type="Rhea" id="RHEA-COMP:10123"/>
        <dbReference type="Rhea" id="RHEA-COMP:13883"/>
        <dbReference type="ChEBI" id="CHEBI:15377"/>
        <dbReference type="ChEBI" id="CHEBI:15378"/>
        <dbReference type="ChEBI" id="CHEBI:59874"/>
        <dbReference type="ChEBI" id="CHEBI:78442"/>
        <dbReference type="ChEBI" id="CHEBI:138191"/>
        <dbReference type="EC" id="3.1.1.29"/>
    </reaction>
</comment>
<comment type="subunit">
    <text evidence="1">Monomer.</text>
</comment>
<comment type="subcellular location">
    <subcellularLocation>
        <location evidence="1">Cytoplasm</location>
    </subcellularLocation>
</comment>
<comment type="similarity">
    <text evidence="1">Belongs to the PTH family.</text>
</comment>
<gene>
    <name evidence="1" type="primary">pth</name>
    <name type="synonym">spoVC</name>
    <name type="ordered locus">GK0046</name>
</gene>
<proteinExistence type="inferred from homology"/>
<feature type="chain" id="PRO_0000187742" description="Peptidyl-tRNA hydrolase">
    <location>
        <begin position="1"/>
        <end position="186"/>
    </location>
</feature>
<feature type="active site" description="Proton acceptor" evidence="1">
    <location>
        <position position="19"/>
    </location>
</feature>
<feature type="binding site" evidence="1">
    <location>
        <position position="14"/>
    </location>
    <ligand>
        <name>tRNA</name>
        <dbReference type="ChEBI" id="CHEBI:17843"/>
    </ligand>
</feature>
<feature type="binding site" evidence="1">
    <location>
        <position position="64"/>
    </location>
    <ligand>
        <name>tRNA</name>
        <dbReference type="ChEBI" id="CHEBI:17843"/>
    </ligand>
</feature>
<feature type="binding site" evidence="1">
    <location>
        <position position="66"/>
    </location>
    <ligand>
        <name>tRNA</name>
        <dbReference type="ChEBI" id="CHEBI:17843"/>
    </ligand>
</feature>
<feature type="binding site" evidence="1">
    <location>
        <position position="112"/>
    </location>
    <ligand>
        <name>tRNA</name>
        <dbReference type="ChEBI" id="CHEBI:17843"/>
    </ligand>
</feature>
<feature type="site" description="Discriminates between blocked and unblocked aminoacyl-tRNA" evidence="1">
    <location>
        <position position="9"/>
    </location>
</feature>
<feature type="site" description="Stabilizes the basic form of H active site to accept a proton" evidence="1">
    <location>
        <position position="91"/>
    </location>
</feature>